<organism>
    <name type="scientific">Staphylococcus haemolyticus (strain JCSC1435)</name>
    <dbReference type="NCBI Taxonomy" id="279808"/>
    <lineage>
        <taxon>Bacteria</taxon>
        <taxon>Bacillati</taxon>
        <taxon>Bacillota</taxon>
        <taxon>Bacilli</taxon>
        <taxon>Bacillales</taxon>
        <taxon>Staphylococcaceae</taxon>
        <taxon>Staphylococcus</taxon>
    </lineage>
</organism>
<name>MNTH_STAHJ</name>
<keyword id="KW-1003">Cell membrane</keyword>
<keyword id="KW-0406">Ion transport</keyword>
<keyword id="KW-0472">Membrane</keyword>
<keyword id="KW-0769">Symport</keyword>
<keyword id="KW-0812">Transmembrane</keyword>
<keyword id="KW-1133">Transmembrane helix</keyword>
<keyword id="KW-0813">Transport</keyword>
<protein>
    <recommendedName>
        <fullName evidence="1">Divalent metal cation transporter MntH</fullName>
    </recommendedName>
</protein>
<gene>
    <name evidence="1" type="primary">mntH</name>
    <name type="ordered locus">SH1847</name>
</gene>
<evidence type="ECO:0000255" key="1">
    <source>
        <dbReference type="HAMAP-Rule" id="MF_00221"/>
    </source>
</evidence>
<reference key="1">
    <citation type="journal article" date="2005" name="J. Bacteriol.">
        <title>Whole-genome sequencing of Staphylococcus haemolyticus uncovers the extreme plasticity of its genome and the evolution of human-colonizing staphylococcal species.</title>
        <authorList>
            <person name="Takeuchi F."/>
            <person name="Watanabe S."/>
            <person name="Baba T."/>
            <person name="Yuzawa H."/>
            <person name="Ito T."/>
            <person name="Morimoto Y."/>
            <person name="Kuroda M."/>
            <person name="Cui L."/>
            <person name="Takahashi M."/>
            <person name="Ankai A."/>
            <person name="Baba S."/>
            <person name="Fukui S."/>
            <person name="Lee J.C."/>
            <person name="Hiramatsu K."/>
        </authorList>
    </citation>
    <scope>NUCLEOTIDE SEQUENCE [LARGE SCALE GENOMIC DNA]</scope>
    <source>
        <strain>JCSC1435</strain>
    </source>
</reference>
<dbReference type="EMBL" id="AP006716">
    <property type="protein sequence ID" value="BAE05156.1"/>
    <property type="molecule type" value="Genomic_DNA"/>
</dbReference>
<dbReference type="RefSeq" id="WP_011276123.1">
    <property type="nucleotide sequence ID" value="NC_007168.1"/>
</dbReference>
<dbReference type="SMR" id="Q4L5B9"/>
<dbReference type="KEGG" id="sha:SH1847"/>
<dbReference type="eggNOG" id="COG1914">
    <property type="taxonomic scope" value="Bacteria"/>
</dbReference>
<dbReference type="HOGENOM" id="CLU_020088_2_0_9"/>
<dbReference type="OrthoDB" id="9787548at2"/>
<dbReference type="Proteomes" id="UP000000543">
    <property type="component" value="Chromosome"/>
</dbReference>
<dbReference type="GO" id="GO:0005886">
    <property type="term" value="C:plasma membrane"/>
    <property type="evidence" value="ECO:0007669"/>
    <property type="project" value="UniProtKB-SubCell"/>
</dbReference>
<dbReference type="GO" id="GO:0015086">
    <property type="term" value="F:cadmium ion transmembrane transporter activity"/>
    <property type="evidence" value="ECO:0007669"/>
    <property type="project" value="TreeGrafter"/>
</dbReference>
<dbReference type="GO" id="GO:0005384">
    <property type="term" value="F:manganese ion transmembrane transporter activity"/>
    <property type="evidence" value="ECO:0007669"/>
    <property type="project" value="TreeGrafter"/>
</dbReference>
<dbReference type="GO" id="GO:0046872">
    <property type="term" value="F:metal ion binding"/>
    <property type="evidence" value="ECO:0007669"/>
    <property type="project" value="UniProtKB-UniRule"/>
</dbReference>
<dbReference type="GO" id="GO:0015293">
    <property type="term" value="F:symporter activity"/>
    <property type="evidence" value="ECO:0007669"/>
    <property type="project" value="UniProtKB-UniRule"/>
</dbReference>
<dbReference type="GO" id="GO:0034755">
    <property type="term" value="P:iron ion transmembrane transport"/>
    <property type="evidence" value="ECO:0007669"/>
    <property type="project" value="TreeGrafter"/>
</dbReference>
<dbReference type="HAMAP" id="MF_00221">
    <property type="entry name" value="NRAMP"/>
    <property type="match status" value="1"/>
</dbReference>
<dbReference type="InterPro" id="IPR001046">
    <property type="entry name" value="NRAMP_fam"/>
</dbReference>
<dbReference type="NCBIfam" id="TIGR01197">
    <property type="entry name" value="nramp"/>
    <property type="match status" value="1"/>
</dbReference>
<dbReference type="NCBIfam" id="NF037982">
    <property type="entry name" value="Nramp_1"/>
    <property type="match status" value="1"/>
</dbReference>
<dbReference type="NCBIfam" id="NF001923">
    <property type="entry name" value="PRK00701.1"/>
    <property type="match status" value="1"/>
</dbReference>
<dbReference type="PANTHER" id="PTHR11706:SF33">
    <property type="entry name" value="NATURAL RESISTANCE-ASSOCIATED MACROPHAGE PROTEIN 2"/>
    <property type="match status" value="1"/>
</dbReference>
<dbReference type="PANTHER" id="PTHR11706">
    <property type="entry name" value="SOLUTE CARRIER PROTEIN FAMILY 11 MEMBER"/>
    <property type="match status" value="1"/>
</dbReference>
<dbReference type="Pfam" id="PF01566">
    <property type="entry name" value="Nramp"/>
    <property type="match status" value="1"/>
</dbReference>
<dbReference type="PRINTS" id="PR00447">
    <property type="entry name" value="NATRESASSCMP"/>
</dbReference>
<accession>Q4L5B9</accession>
<comment type="function">
    <text evidence="1">H(+)-stimulated, divalent metal cation uptake system.</text>
</comment>
<comment type="subcellular location">
    <subcellularLocation>
        <location evidence="1">Cell membrane</location>
        <topology evidence="1">Multi-pass membrane protein</topology>
    </subcellularLocation>
</comment>
<comment type="similarity">
    <text evidence="1">Belongs to the NRAMP family.</text>
</comment>
<sequence>MGVIDNKEQRSLDEINSTIEFNDSQRTSQKFLAFLGPGLLVAVGYMDPGNWITSMQGGAQFGYTLLFVILISSLSAMLLQSMTVRLGIATDKDLAQMTRHYLNKPTAIIFWVIAELAIIATDIAEVIGSAIALDLLFNIPLIIGALITVFDVFLLLFIMKFGFRKIEAIVGTLIFTVLMIFVFEVYISSPNLIEILNGFVPHYQIIANHSILYIALGIIGATIMPHNLYLHSSIVQSRKYNRHSFTEKAQAIKFATIDSNIQLSIAFIVNCLLLVLGAALFYGVNSNNIGGFYDLYQALRTQPVLGVVMGSIMSTLFAIALLASGQNSTITGTLAGQIVMEGFLKLSIPNWMRRLVTRSLAVIPVLLCLVIFRGNESKMEQLLVFSQVFLSIALPFSLIPLQLATSNEKLMGPFKNKKWVNICAWGLIIILSFLNIYLIIETFKEL</sequence>
<proteinExistence type="inferred from homology"/>
<feature type="chain" id="PRO_0000325609" description="Divalent metal cation transporter MntH">
    <location>
        <begin position="1"/>
        <end position="446"/>
    </location>
</feature>
<feature type="transmembrane region" description="Helical" evidence="1">
    <location>
        <begin position="32"/>
        <end position="52"/>
    </location>
</feature>
<feature type="transmembrane region" description="Helical" evidence="1">
    <location>
        <begin position="59"/>
        <end position="79"/>
    </location>
</feature>
<feature type="transmembrane region" description="Helical" evidence="1">
    <location>
        <begin position="107"/>
        <end position="127"/>
    </location>
</feature>
<feature type="transmembrane region" description="Helical" evidence="1">
    <location>
        <begin position="139"/>
        <end position="159"/>
    </location>
</feature>
<feature type="transmembrane region" description="Helical" evidence="1">
    <location>
        <begin position="168"/>
        <end position="188"/>
    </location>
</feature>
<feature type="transmembrane region" description="Helical" evidence="1">
    <location>
        <begin position="205"/>
        <end position="225"/>
    </location>
</feature>
<feature type="transmembrane region" description="Helical" evidence="1">
    <location>
        <begin position="264"/>
        <end position="284"/>
    </location>
</feature>
<feature type="transmembrane region" description="Helical" evidence="1">
    <location>
        <begin position="303"/>
        <end position="323"/>
    </location>
</feature>
<feature type="transmembrane region" description="Helical" evidence="1">
    <location>
        <begin position="355"/>
        <end position="375"/>
    </location>
</feature>
<feature type="transmembrane region" description="Helical" evidence="1">
    <location>
        <begin position="381"/>
        <end position="401"/>
    </location>
</feature>
<feature type="transmembrane region" description="Helical" evidence="1">
    <location>
        <begin position="420"/>
        <end position="440"/>
    </location>
</feature>